<name>CAC1B_RABIT</name>
<protein>
    <recommendedName>
        <fullName>Voltage-dependent N-type calcium channel subunit alpha-1B</fullName>
    </recommendedName>
    <alternativeName>
        <fullName>Brain calcium channel III</fullName>
        <shortName>BIII</shortName>
    </alternativeName>
    <alternativeName>
        <fullName>Calcium channel, L type, alpha-1 polypeptide isoform 5</fullName>
    </alternativeName>
    <alternativeName>
        <fullName>Voltage-gated calcium channel subunit alpha Cav2.2</fullName>
    </alternativeName>
</protein>
<feature type="chain" id="PRO_0000053923" description="Voltage-dependent N-type calcium channel subunit alpha-1B">
    <location>
        <begin position="1"/>
        <end position="2339"/>
    </location>
</feature>
<feature type="topological domain" description="Cytoplasmic" evidence="4">
    <location>
        <begin position="1"/>
        <end position="90"/>
    </location>
</feature>
<feature type="transmembrane region" description="Helical; Name=S1 of repeat I" evidence="4">
    <location>
        <begin position="91"/>
        <end position="114"/>
    </location>
</feature>
<feature type="topological domain" description="Extracellular" evidence="4">
    <location>
        <begin position="115"/>
        <end position="131"/>
    </location>
</feature>
<feature type="transmembrane region" description="Helical; Name=S2 of repeat I" evidence="4">
    <location>
        <begin position="132"/>
        <end position="152"/>
    </location>
</feature>
<feature type="topological domain" description="Cytoplasmic" evidence="4">
    <location>
        <begin position="153"/>
        <end position="163"/>
    </location>
</feature>
<feature type="transmembrane region" description="Helical; Name=S3 of repeat I" evidence="4">
    <location>
        <begin position="164"/>
        <end position="182"/>
    </location>
</feature>
<feature type="topological domain" description="Extracellular" evidence="4">
    <location>
        <begin position="183"/>
        <end position="187"/>
    </location>
</feature>
<feature type="transmembrane region" description="Helical; Name=S4 of repeat I" evidence="4">
    <location>
        <begin position="188"/>
        <end position="211"/>
    </location>
</feature>
<feature type="topological domain" description="Cytoplasmic" evidence="4">
    <location>
        <begin position="212"/>
        <end position="221"/>
    </location>
</feature>
<feature type="transmembrane region" description="Helical; Name=S5 of repeat I" evidence="4">
    <location>
        <begin position="222"/>
        <end position="244"/>
    </location>
</feature>
<feature type="topological domain" description="Extracellular" evidence="4">
    <location>
        <begin position="245"/>
        <end position="331"/>
    </location>
</feature>
<feature type="transmembrane region" description="Helical; Name=S6 of repeat I" evidence="4">
    <location>
        <begin position="332"/>
        <end position="356"/>
    </location>
</feature>
<feature type="topological domain" description="Cytoplasmic" evidence="4">
    <location>
        <begin position="357"/>
        <end position="483"/>
    </location>
</feature>
<feature type="transmembrane region" description="Helical; Name=S1 of repeat II" evidence="4">
    <location>
        <begin position="484"/>
        <end position="502"/>
    </location>
</feature>
<feature type="topological domain" description="Extracellular" evidence="4">
    <location>
        <begin position="503"/>
        <end position="512"/>
    </location>
</feature>
<feature type="transmembrane region" description="Helical; Name=S2 of repeat II" evidence="4">
    <location>
        <begin position="513"/>
        <end position="535"/>
    </location>
</feature>
<feature type="topological domain" description="Cytoplasmic" evidence="4">
    <location>
        <begin position="536"/>
        <end position="545"/>
    </location>
</feature>
<feature type="transmembrane region" description="Helical; Name=S3 of repeat II" evidence="4">
    <location>
        <begin position="546"/>
        <end position="567"/>
    </location>
</feature>
<feature type="topological domain" description="Extracellular" evidence="4">
    <location>
        <begin position="568"/>
        <end position="574"/>
    </location>
</feature>
<feature type="transmembrane region" description="Helical; Name=S4 of repeat II" evidence="4">
    <location>
        <begin position="575"/>
        <end position="587"/>
    </location>
</feature>
<feature type="topological domain" description="Cytoplasmic" evidence="4">
    <location>
        <begin position="588"/>
        <end position="605"/>
    </location>
</feature>
<feature type="transmembrane region" description="Helical; Name=S5 of repeat II" evidence="4">
    <location>
        <begin position="606"/>
        <end position="631"/>
    </location>
</feature>
<feature type="topological domain" description="Extracellular" evidence="4">
    <location>
        <begin position="632"/>
        <end position="683"/>
    </location>
</feature>
<feature type="transmembrane region" description="Helical; Name=S6 of repeat II" evidence="4">
    <location>
        <begin position="684"/>
        <end position="710"/>
    </location>
</feature>
<feature type="topological domain" description="Cytoplasmic" evidence="4">
    <location>
        <begin position="711"/>
        <end position="1156"/>
    </location>
</feature>
<feature type="transmembrane region" description="Helical; Name=S1 of repeat III" evidence="4">
    <location>
        <begin position="1157"/>
        <end position="1175"/>
    </location>
</feature>
<feature type="topological domain" description="Extracellular" evidence="4">
    <location>
        <begin position="1176"/>
        <end position="1183"/>
    </location>
</feature>
<feature type="transmembrane region" description="Helical; Name=S2 of repeat III" evidence="4">
    <location>
        <begin position="1184"/>
        <end position="1208"/>
    </location>
</feature>
<feature type="topological domain" description="Cytoplasmic" evidence="4">
    <location>
        <begin position="1209"/>
        <end position="1222"/>
    </location>
</feature>
<feature type="transmembrane region" description="Helical; Name=S3 of repeat III" evidence="4">
    <location>
        <begin position="1223"/>
        <end position="1243"/>
    </location>
</feature>
<feature type="topological domain" description="Extracellular" evidence="4">
    <location>
        <begin position="1244"/>
        <end position="1249"/>
    </location>
</feature>
<feature type="transmembrane region" description="Helical; Name=S4 of repeat III" evidence="4">
    <location>
        <begin position="1250"/>
        <end position="1270"/>
    </location>
</feature>
<feature type="topological domain" description="Cytoplasmic" evidence="4">
    <location>
        <begin position="1271"/>
        <end position="1288"/>
    </location>
</feature>
<feature type="transmembrane region" description="Helical; Name=S5 of repeat III" evidence="4">
    <location>
        <begin position="1289"/>
        <end position="1308"/>
    </location>
</feature>
<feature type="topological domain" description="Extracellular" evidence="4">
    <location>
        <begin position="1309"/>
        <end position="1395"/>
    </location>
</feature>
<feature type="transmembrane region" description="Helical; Name=S6 of repeat III" evidence="4">
    <location>
        <begin position="1396"/>
        <end position="1421"/>
    </location>
</feature>
<feature type="topological domain" description="Cytoplasmic" evidence="4">
    <location>
        <begin position="1422"/>
        <end position="1476"/>
    </location>
</feature>
<feature type="transmembrane region" description="Helical; Name=S1 of repeat IV" evidence="4">
    <location>
        <begin position="1477"/>
        <end position="1495"/>
    </location>
</feature>
<feature type="topological domain" description="Extracellular" evidence="4">
    <location>
        <begin position="1496"/>
        <end position="1503"/>
    </location>
</feature>
<feature type="transmembrane region" description="Helical; Name=S2 of repeat IV" evidence="4">
    <location>
        <begin position="1504"/>
        <end position="1528"/>
    </location>
</feature>
<feature type="topological domain" description="Cytoplasmic" evidence="4">
    <location>
        <begin position="1529"/>
        <end position="1538"/>
    </location>
</feature>
<feature type="transmembrane region" description="Helical; Name=S3 of repeat IV" evidence="4">
    <location>
        <begin position="1539"/>
        <end position="1560"/>
    </location>
</feature>
<feature type="topological domain" description="Extracellular" evidence="4">
    <location>
        <begin position="1561"/>
        <end position="1566"/>
    </location>
</feature>
<feature type="transmembrane region" description="Helical; Name=S4 of repeat IV" evidence="4">
    <location>
        <begin position="1567"/>
        <end position="1585"/>
    </location>
</feature>
<feature type="topological domain" description="Cytoplasmic" evidence="4">
    <location>
        <begin position="1586"/>
        <end position="1604"/>
    </location>
</feature>
<feature type="transmembrane region" description="Helical; Name=S5 of repeat IV" evidence="4">
    <location>
        <begin position="1605"/>
        <end position="1624"/>
    </location>
</feature>
<feature type="topological domain" description="Extracellular" evidence="4">
    <location>
        <begin position="1625"/>
        <end position="1686"/>
    </location>
</feature>
<feature type="transmembrane region" description="Helical; Name=S6 of repeat IV" evidence="4">
    <location>
        <begin position="1687"/>
        <end position="1710"/>
    </location>
</feature>
<feature type="topological domain" description="Cytoplasmic" evidence="4">
    <location>
        <begin position="1711"/>
        <end position="2339"/>
    </location>
</feature>
<feature type="repeat" description="I">
    <location>
        <begin position="82"/>
        <end position="359"/>
    </location>
</feature>
<feature type="repeat" description="II">
    <location>
        <begin position="469"/>
        <end position="713"/>
    </location>
</feature>
<feature type="repeat" description="III">
    <location>
        <begin position="1142"/>
        <end position="1424"/>
    </location>
</feature>
<feature type="repeat" description="IV">
    <location>
        <begin position="1461"/>
        <end position="1714"/>
    </location>
</feature>
<feature type="domain" description="EF-hand" evidence="7">
    <location>
        <begin position="1727"/>
        <end position="1762"/>
    </location>
</feature>
<feature type="region of interest" description="Disordered" evidence="8">
    <location>
        <begin position="15"/>
        <end position="37"/>
    </location>
</feature>
<feature type="region of interest" description="Binding to the beta subunit" evidence="1">
    <location>
        <begin position="379"/>
        <end position="396"/>
    </location>
</feature>
<feature type="region of interest" description="Disordered" evidence="8">
    <location>
        <begin position="809"/>
        <end position="1026"/>
    </location>
</feature>
<feature type="region of interest" description="Disordered" evidence="8">
    <location>
        <begin position="1056"/>
        <end position="1084"/>
    </location>
</feature>
<feature type="region of interest" description="Disordered" evidence="8">
    <location>
        <begin position="1983"/>
        <end position="2312"/>
    </location>
</feature>
<feature type="compositionally biased region" description="Gly residues" evidence="8">
    <location>
        <begin position="15"/>
        <end position="34"/>
    </location>
</feature>
<feature type="compositionally biased region" description="Basic and acidic residues" evidence="8">
    <location>
        <begin position="809"/>
        <end position="827"/>
    </location>
</feature>
<feature type="compositionally biased region" description="Basic and acidic residues" evidence="8">
    <location>
        <begin position="870"/>
        <end position="891"/>
    </location>
</feature>
<feature type="compositionally biased region" description="Basic and acidic residues" evidence="8">
    <location>
        <begin position="927"/>
        <end position="937"/>
    </location>
</feature>
<feature type="compositionally biased region" description="Basic and acidic residues" evidence="8">
    <location>
        <begin position="973"/>
        <end position="984"/>
    </location>
</feature>
<feature type="compositionally biased region" description="Basic and acidic residues" evidence="8">
    <location>
        <begin position="999"/>
        <end position="1026"/>
    </location>
</feature>
<feature type="compositionally biased region" description="Polar residues" evidence="8">
    <location>
        <begin position="1066"/>
        <end position="1083"/>
    </location>
</feature>
<feature type="compositionally biased region" description="Basic residues" evidence="8">
    <location>
        <begin position="2050"/>
        <end position="2064"/>
    </location>
</feature>
<feature type="compositionally biased region" description="Basic and acidic residues" evidence="8">
    <location>
        <begin position="2099"/>
        <end position="2136"/>
    </location>
</feature>
<feature type="compositionally biased region" description="Polar residues" evidence="8">
    <location>
        <begin position="2144"/>
        <end position="2155"/>
    </location>
</feature>
<feature type="compositionally biased region" description="Polar residues" evidence="8">
    <location>
        <begin position="2165"/>
        <end position="2181"/>
    </location>
</feature>
<feature type="compositionally biased region" description="Low complexity" evidence="8">
    <location>
        <begin position="2286"/>
        <end position="2302"/>
    </location>
</feature>
<feature type="binding site" evidence="6">
    <location>
        <begin position="452"/>
        <end position="459"/>
    </location>
    <ligand>
        <name>ATP</name>
        <dbReference type="ChEBI" id="CHEBI:30616"/>
    </ligand>
</feature>
<feature type="binding site" evidence="4">
    <location>
        <position position="545"/>
    </location>
    <ligand>
        <name>a 1,2-diacyl-sn-glycero-3-phospho-(1D-myo-inositol-4,5-bisphosphate)</name>
        <dbReference type="ChEBI" id="CHEBI:58456"/>
    </ligand>
</feature>
<feature type="binding site" evidence="4">
    <location>
        <position position="585"/>
    </location>
    <ligand>
        <name>a 1,2-diacyl-sn-glycero-3-phospho-(1D-myo-inositol-4,5-bisphosphate)</name>
        <dbReference type="ChEBI" id="CHEBI:58456"/>
    </ligand>
</feature>
<feature type="binding site" evidence="4">
    <location>
        <position position="588"/>
    </location>
    <ligand>
        <name>a 1,2-diacyl-sn-glycero-3-phospho-(1D-myo-inositol-4,5-bisphosphate)</name>
        <dbReference type="ChEBI" id="CHEBI:58456"/>
    </ligand>
</feature>
<feature type="binding site" evidence="10">
    <location>
        <position position="1740"/>
    </location>
    <ligand>
        <name>Ca(2+)</name>
        <dbReference type="ChEBI" id="CHEBI:29108"/>
    </ligand>
</feature>
<feature type="binding site" evidence="10">
    <location>
        <position position="1746"/>
    </location>
    <ligand>
        <name>Ca(2+)</name>
        <dbReference type="ChEBI" id="CHEBI:29108"/>
    </ligand>
</feature>
<feature type="binding site" evidence="10">
    <location>
        <position position="1751"/>
    </location>
    <ligand>
        <name>Ca(2+)</name>
        <dbReference type="ChEBI" id="CHEBI:29108"/>
    </ligand>
</feature>
<feature type="site" description="Calcium ion selectivity and permeability" evidence="3">
    <location>
        <position position="314"/>
    </location>
</feature>
<feature type="site" description="Calcium ion selectivity and permeability" evidence="3">
    <location>
        <position position="663"/>
    </location>
</feature>
<feature type="site" description="Calcium ion selectivity and permeability" evidence="3">
    <location>
        <position position="1370"/>
    </location>
</feature>
<feature type="site" description="Calcium ion selectivity and permeability" evidence="3">
    <location>
        <position position="1658"/>
    </location>
</feature>
<feature type="modified residue" description="Omega-N-methylarginine" evidence="2">
    <location>
        <position position="22"/>
    </location>
</feature>
<feature type="modified residue" description="Phosphoserine" evidence="2">
    <location>
        <position position="411"/>
    </location>
</feature>
<feature type="modified residue" description="Phosphoserine" evidence="2">
    <location>
        <position position="746"/>
    </location>
</feature>
<feature type="modified residue" description="Phosphoserine" evidence="2">
    <location>
        <position position="749"/>
    </location>
</feature>
<feature type="modified residue" description="Phosphoserine" evidence="2">
    <location>
        <position position="784"/>
    </location>
</feature>
<feature type="modified residue" description="Phosphoserine" evidence="2">
    <location>
        <position position="1074"/>
    </location>
</feature>
<feature type="modified residue" description="Phosphoserine" evidence="2">
    <location>
        <position position="2067"/>
    </location>
</feature>
<feature type="modified residue" description="Phosphoserine" evidence="2">
    <location>
        <position position="2224"/>
    </location>
</feature>
<feature type="modified residue" description="Phosphoserine" evidence="2">
    <location>
        <position position="2233"/>
    </location>
</feature>
<feature type="modified residue" description="Phosphoserine" evidence="2">
    <location>
        <position position="2256"/>
    </location>
</feature>
<feature type="glycosylation site" description="N-linked (GlcNAc...) asparagine" evidence="4">
    <location>
        <position position="256"/>
    </location>
</feature>
<feature type="glycosylation site" description="N-linked (GlcNAc...) asparagine" evidence="6">
    <location>
        <position position="1566"/>
    </location>
</feature>
<feature type="glycosylation site" description="N-linked (GlcNAc...) asparagine" evidence="6">
    <location>
        <position position="1678"/>
    </location>
</feature>
<feature type="helix" evidence="11">
    <location>
        <begin position="1855"/>
        <end position="1869"/>
    </location>
</feature>
<dbReference type="EMBL" id="D14157">
    <property type="protein sequence ID" value="BAA03202.1"/>
    <property type="molecule type" value="mRNA"/>
</dbReference>
<dbReference type="RefSeq" id="NP_001075660.1">
    <property type="nucleotide sequence ID" value="NM_001082191.1"/>
</dbReference>
<dbReference type="PDB" id="3DVE">
    <property type="method" value="X-ray"/>
    <property type="resolution" value="2.35 A"/>
    <property type="chains" value="B=1855-1875"/>
</dbReference>
<dbReference type="PDB" id="3DVJ">
    <property type="method" value="X-ray"/>
    <property type="resolution" value="2.80 A"/>
    <property type="chains" value="B=1853-1873"/>
</dbReference>
<dbReference type="PDBsum" id="3DVE"/>
<dbReference type="PDBsum" id="3DVJ"/>
<dbReference type="SMR" id="Q05152"/>
<dbReference type="BioGRID" id="1172002">
    <property type="interactions" value="2"/>
</dbReference>
<dbReference type="DIP" id="DIP-29592N"/>
<dbReference type="FunCoup" id="Q05152">
    <property type="interactions" value="147"/>
</dbReference>
<dbReference type="IntAct" id="Q05152">
    <property type="interactions" value="2"/>
</dbReference>
<dbReference type="STRING" id="9986.ENSOCUP00000010930"/>
<dbReference type="GlyCosmos" id="Q05152">
    <property type="glycosylation" value="3 sites, No reported glycans"/>
</dbReference>
<dbReference type="iPTMnet" id="Q05152"/>
<dbReference type="PaxDb" id="9986-ENSOCUP00000010930"/>
<dbReference type="GeneID" id="100008979"/>
<dbReference type="KEGG" id="ocu:100008979"/>
<dbReference type="CTD" id="774"/>
<dbReference type="eggNOG" id="KOG2301">
    <property type="taxonomic scope" value="Eukaryota"/>
</dbReference>
<dbReference type="InParanoid" id="Q05152"/>
<dbReference type="OrthoDB" id="431720at2759"/>
<dbReference type="EvolutionaryTrace" id="Q05152"/>
<dbReference type="Proteomes" id="UP000001811">
    <property type="component" value="Unplaced"/>
</dbReference>
<dbReference type="GO" id="GO:0009986">
    <property type="term" value="C:cell surface"/>
    <property type="evidence" value="ECO:0000314"/>
    <property type="project" value="UniProtKB"/>
</dbReference>
<dbReference type="GO" id="GO:0043025">
    <property type="term" value="C:neuronal cell body"/>
    <property type="evidence" value="ECO:0007669"/>
    <property type="project" value="TreeGrafter"/>
</dbReference>
<dbReference type="GO" id="GO:0045202">
    <property type="term" value="C:synapse"/>
    <property type="evidence" value="ECO:0007669"/>
    <property type="project" value="GOC"/>
</dbReference>
<dbReference type="GO" id="GO:0005891">
    <property type="term" value="C:voltage-gated calcium channel complex"/>
    <property type="evidence" value="ECO:0000314"/>
    <property type="project" value="UniProtKB"/>
</dbReference>
<dbReference type="GO" id="GO:0005524">
    <property type="term" value="F:ATP binding"/>
    <property type="evidence" value="ECO:0007669"/>
    <property type="project" value="UniProtKB-KW"/>
</dbReference>
<dbReference type="GO" id="GO:0005509">
    <property type="term" value="F:calcium ion binding"/>
    <property type="evidence" value="ECO:0007669"/>
    <property type="project" value="InterPro"/>
</dbReference>
<dbReference type="GO" id="GO:0008331">
    <property type="term" value="F:high voltage-gated calcium channel activity"/>
    <property type="evidence" value="ECO:0007669"/>
    <property type="project" value="TreeGrafter"/>
</dbReference>
<dbReference type="GO" id="GO:0005245">
    <property type="term" value="F:voltage-gated calcium channel activity"/>
    <property type="evidence" value="ECO:0000314"/>
    <property type="project" value="UniProtKB"/>
</dbReference>
<dbReference type="GO" id="GO:0098703">
    <property type="term" value="P:calcium ion import across plasma membrane"/>
    <property type="evidence" value="ECO:0007669"/>
    <property type="project" value="TreeGrafter"/>
</dbReference>
<dbReference type="GO" id="GO:0006816">
    <property type="term" value="P:calcium ion transport"/>
    <property type="evidence" value="ECO:0000314"/>
    <property type="project" value="UniProtKB"/>
</dbReference>
<dbReference type="GO" id="GO:0007268">
    <property type="term" value="P:chemical synaptic transmission"/>
    <property type="evidence" value="ECO:0007669"/>
    <property type="project" value="TreeGrafter"/>
</dbReference>
<dbReference type="FunFam" id="1.20.120.350:FF:000001">
    <property type="entry name" value="Voltage-dependent L-type calcium channel subunit alpha"/>
    <property type="match status" value="1"/>
</dbReference>
<dbReference type="FunFam" id="1.10.238.10:FF:000063">
    <property type="entry name" value="Voltage-dependent N-type calcium channel subunit alpha"/>
    <property type="match status" value="1"/>
</dbReference>
<dbReference type="FunFam" id="1.20.120.350:FF:000011">
    <property type="entry name" value="Voltage-dependent N-type calcium channel subunit alpha"/>
    <property type="match status" value="1"/>
</dbReference>
<dbReference type="FunFam" id="1.20.120.350:FF:000013">
    <property type="entry name" value="Voltage-dependent N-type calcium channel subunit alpha"/>
    <property type="match status" value="1"/>
</dbReference>
<dbReference type="FunFam" id="1.20.120.350:FF:000015">
    <property type="entry name" value="Voltage-dependent N-type calcium channel subunit alpha"/>
    <property type="match status" value="1"/>
</dbReference>
<dbReference type="FunFam" id="1.10.287.70:FF:000023">
    <property type="entry name" value="Voltage-dependent R-type calcium channel subunit alpha"/>
    <property type="match status" value="1"/>
</dbReference>
<dbReference type="FunFam" id="1.10.287.70:FF:000025">
    <property type="entry name" value="Voltage-dependent R-type calcium channel subunit alpha"/>
    <property type="match status" value="1"/>
</dbReference>
<dbReference type="Gene3D" id="1.10.287.70">
    <property type="match status" value="4"/>
</dbReference>
<dbReference type="Gene3D" id="6.10.250.2180">
    <property type="match status" value="1"/>
</dbReference>
<dbReference type="Gene3D" id="6.10.250.2500">
    <property type="match status" value="1"/>
</dbReference>
<dbReference type="Gene3D" id="1.20.120.350">
    <property type="entry name" value="Voltage-gated potassium channels. Chain C"/>
    <property type="match status" value="4"/>
</dbReference>
<dbReference type="InterPro" id="IPR002048">
    <property type="entry name" value="EF_hand_dom"/>
</dbReference>
<dbReference type="InterPro" id="IPR031649">
    <property type="entry name" value="GPHH_dom"/>
</dbReference>
<dbReference type="InterPro" id="IPR005821">
    <property type="entry name" value="Ion_trans_dom"/>
</dbReference>
<dbReference type="InterPro" id="IPR014873">
    <property type="entry name" value="VDCC_a1su_IQ"/>
</dbReference>
<dbReference type="InterPro" id="IPR050599">
    <property type="entry name" value="VDCC_alpha-1_subunit"/>
</dbReference>
<dbReference type="InterPro" id="IPR005447">
    <property type="entry name" value="VDCC_N_a1su"/>
</dbReference>
<dbReference type="InterPro" id="IPR002077">
    <property type="entry name" value="VDCCAlpha1"/>
</dbReference>
<dbReference type="InterPro" id="IPR027359">
    <property type="entry name" value="Volt_channel_dom_sf"/>
</dbReference>
<dbReference type="PANTHER" id="PTHR45628">
    <property type="entry name" value="VOLTAGE-DEPENDENT CALCIUM CHANNEL TYPE A SUBUNIT ALPHA-1"/>
    <property type="match status" value="1"/>
</dbReference>
<dbReference type="PANTHER" id="PTHR45628:SF6">
    <property type="entry name" value="VOLTAGE-DEPENDENT N-TYPE CALCIUM CHANNEL SUBUNIT ALPHA-1B"/>
    <property type="match status" value="1"/>
</dbReference>
<dbReference type="Pfam" id="PF08763">
    <property type="entry name" value="Ca_chan_IQ"/>
    <property type="match status" value="1"/>
</dbReference>
<dbReference type="Pfam" id="PF16905">
    <property type="entry name" value="GPHH"/>
    <property type="match status" value="1"/>
</dbReference>
<dbReference type="Pfam" id="PF00520">
    <property type="entry name" value="Ion_trans"/>
    <property type="match status" value="4"/>
</dbReference>
<dbReference type="PRINTS" id="PR00167">
    <property type="entry name" value="CACHANNEL"/>
</dbReference>
<dbReference type="PRINTS" id="PR01631">
    <property type="entry name" value="NVDCCALPHA1"/>
</dbReference>
<dbReference type="SMART" id="SM01062">
    <property type="entry name" value="Ca_chan_IQ"/>
    <property type="match status" value="1"/>
</dbReference>
<dbReference type="SUPFAM" id="SSF81324">
    <property type="entry name" value="Voltage-gated potassium channels"/>
    <property type="match status" value="4"/>
</dbReference>
<dbReference type="PROSITE" id="PS50222">
    <property type="entry name" value="EF_HAND_2"/>
    <property type="match status" value="1"/>
</dbReference>
<comment type="function">
    <text evidence="5 9">Voltage-sensitive calcium channels (VSCC) mediate the entry of calcium ions into excitable cells and are also involved in a variety of calcium-dependent processes, including muscle contraction, hormone or neurotransmitter release, gene expression, cell motility, cell division and cell death. This alpha-1B subunit gives rise to N-type calcium currents. N-type calcium channels belong to the 'high-voltage activated' (HVA) group. They are involved in pain signaling (PubMed:8386525). Calcium channels containing alpha-1B subunit may play a role in directed migration of immature neurons. Mediates Ca(2+) release probability at hippocampal neuronal soma and synaptic terminals (By similarity).</text>
</comment>
<comment type="catalytic activity">
    <reaction evidence="9">
        <text>Ca(2+)(in) = Ca(2+)(out)</text>
        <dbReference type="Rhea" id="RHEA:29671"/>
        <dbReference type="ChEBI" id="CHEBI:29108"/>
    </reaction>
</comment>
<comment type="activity regulation">
    <text evidence="4 5 9">Is specifically blocked by omega-conotoxin GVIA (PubMed:8386525). Is specifically blocked by omega-conotoxin MVIIA (ziconotide) (By similarity). Is insensitive to dihydropyridines (DHP) (By similarity).</text>
</comment>
<comment type="subunit">
    <text evidence="2">Multisubunit complex consisting of alpha-1, alpha-2, beta and delta subunits in a 1:1:1:1 ratio. The channel activity is directed by the pore-forming and voltage-sensitive alpha-1 subunit. In many cases, this subunit is sufficient to generate voltage-sensitive calcium channel activity. The auxiliary subunits beta and alpha-2/delta linked by a disulfide bridge regulate the channel activity. Interacts with RIMS1. Interacts with FMR1 (via C-terminus); this interaction induces a decrease in the number of presynaptic functional CACNA1B channels at the cell surface.</text>
</comment>
<comment type="interaction">
    <interactant intactId="EBI-15685496">
        <id>Q05152</id>
    </interactant>
    <interactant intactId="EBI-397435">
        <id>P62158</id>
        <label>CALM3</label>
    </interactant>
    <organismsDiffer>true</organismsDiffer>
    <experiments>2</experiments>
</comment>
<comment type="subcellular location">
    <subcellularLocation>
        <location evidence="4">Membrane</location>
        <topology evidence="6">Multi-pass membrane protein</topology>
    </subcellularLocation>
</comment>
<comment type="tissue specificity">
    <text evidence="9">Widespread expression throughout the brain. Highest levels in corpus striatum and midbrain.</text>
</comment>
<comment type="domain">
    <text>Each of the four internal repeats contains five hydrophobic transmembrane segments (S1, S2, S3, S5, S6) and one positively charged transmembrane segment (S4). S4 segments probably represent the voltage-sensor and are characterized by a series of positively charged amino acids at every third position.</text>
</comment>
<comment type="PTM">
    <text evidence="5">Phosphorylated in vitro by CaM-kinase II, PKA, PKC and CGPK.</text>
</comment>
<comment type="similarity">
    <text evidence="10">Belongs to the calcium channel alpha-1 subunit (TC 1.A.1.11) family. CACNA1B subfamily.</text>
</comment>
<sequence length="2339" mass="261181">MVRFGDELGGRYGGAGGAERARGGGAGGAGGPGPGGLPPGQRVLYKQSIAQRARTMALYNPIPVKQNCFTVNRSLFVFSEDNVVRKYAKRITEWPPFEYMILATIIANCIVLALEQHLPDGDKTPMSERLDDTEPYFIGIFCFEAGIKILALGFVLHKGSYLRNGWNVMDFVVVLTGILATAGTDFDLRTLRAVRVLRPLKLVSGIPSLQVVLKSIMKAMVPLLQIGLLLFFAILMFAIIGLEFYMGKFHKACFPNSTDPDPVGDFPCGKEAPARLCEGDTECREYWAGPNFGITNFDNILFAILTVFQCITMEGWTDILYNTNDAAGNTWNWLYFIPLIIIGSFFMLNLVLGVLSGEFAKERERVENRRAFLKLRRQQQIERELNGYLEWIFKAEEVMLAEEDRNAEEKSPLDAVLKRAAAKKSRSDLIQAEEGEGRLTGLCAPGSPFARASLKSGKTESSSYFRRKEKMFRFFIRRMVKAQSFYWTVLCVVALNTLCVAMVHYNQPQRLTTALYFAEFVFLGLFLTEMSLKMYGLGPRSYFRSSFNCFDFGVIVGSIFEVVWAAVKPGTSFGISVLRALRLLRIFKVTKYWNSLRNLVVSLLNSMKSIISLLFLLFLFIVVFALLGMQLFGGQFNFKDETPTTNFDTFPAAILTVFQILTGEDWNAVMYHGIESQGGVSRGMFSSFYFIVLTLFGNYTLLNVFLAIAVDNLANAQELTKDEEEMEEAANQKLALQKAKEVAEVSPMSAANISIAARQQNSAKARSVWEQRASQLRLQNLRASCEALYSEMDPEERLRYATARHLRPDVKTHLDRPLVVEPGRDAPRGPPGGKSRPDGSEAPEGADPPRRHHRHRDKDKAPATVPSAGEQDRAEALRAEGGELGPREERGRPRRSRSKEAPGAPEVRSDRGRGPCPEGGRRHHRRGSPEEAAEREPRRHRAHRHGPDPGKEGPASGTRGERRARHRTGPRACPREAESSEEPARRHRARHKAPPTQETAEKDKEAAEKGGEATEAEKDKEARNHQPKELPCDLEAIGMLGVGAVHTLPSTCLQKVEEQPEDADNQRNVTRMGSQPPDTSTTVHIPVTLTGPPGETTVVPSGNVDLESQAEGKKEVETSDVMRSGPRPIVPYSSMFCLSPTNLLRRCCHYIVTMRYFEMVILVVIALSSIALAAEDPVRTDSPRNNALKYMDYIFTGVFTFEMVIKMIDLGLLLHPGAYFRDLWNILDFIVVSGALVAFAFSGSKGKDISTIKSLRVLRVLRPLKTIKRLPKLKAVFDCVVNSLKNVLNILIVYMLFMFIFAVIAVQLFKGKFFYCTDESKELERDCRGQYLDYEKEEVEAQPRQWKKYDFHYDNVLWALLTLFTVSTGEGWPMVLKHSVDATYEEQGPSPGYRMELSIFYVVYFVVFPFFFVNIFVALIIITFQEQGDKVMSECSLEKNERACIDFAISARPLTRYMPQNKQSFQYKTWTFVVSPPFEYFIMAMIALNTVVLMMKFYDAPYEYELMLKCLNIVFTSMFSMECVLKIIAFGVLNYFRDAWNVFDFVTVLGSITDILVTEIANNFINLSFLRLFRAARLIKLLRQGYTIRILLWTFVQSFKALPYVCLLIAMLFFIYAIIGMQVFGNIALDDDTSINRHNNFRTFLQALMLLFRSATGEAWHEIMLSCLSSRACDEHSNASECGSDFAYFYFVSFIFLCSFLMLNLFVAVIMDNFEYLTRDSSILGPHHLDEFIRVWAEYDPAACGRISYSDMFEMLKHMSPPLGLGKKCPARVAYKRLVRMNMPISSEDMTVHFTSTLMALIRTALDIKLAPAGTKQHQCDAELRKEISCVWANLPQKTLDLLVPPHKPDEMTVGKVYAALMIFDFYKQNKTSRDQTQQAPGGLSQLGPVSLFHPLKATLEQTQPALRGARAFLRQKSSASLSNGGAVQTQESGIKESVSWGTQRTQDVLCEARAPLERGHSAEIPVGQPGTLAVDVQMQNMTLSGPDAEPQPGLESQGRAASMPRLAAETQPAPDASPMKRSISTLAPRPHTARLGSTALDRPAPSQAPHHHHHRCHRRRDRKQRSLEKGPSLSADTDGAPDSTVGPGLPTGEGPPGCRRERERRQERGRSQERRQPSSSSSEKHRFYSCDRFGGREPPQPKPSLSSHPTSPTAGQEPGPHPQGSGSVHGSPLLSTSGASTPGRGRRQLPQTPLTPRPSVTYKTANSSPVHFAGAPSGLPAFSPGRLSRGLSEHNALLQRDPLSRPLAPGSRIGSDPYLGQRLDSEAPARALPEDAPAFEETAASNSGRSSRTSYVSSLTSQPPPLRRVPNGYHCTLGLGGGGRARRGCHHPDRDRRC</sequence>
<reference key="1">
    <citation type="journal article" date="1993" name="Neuron">
        <title>Primary structure and functional expression of the omega-conotoxin-sensitive N-type calcium channel from rabbit brain.</title>
        <authorList>
            <person name="Fujita Y."/>
            <person name="Mynlieff M."/>
            <person name="Dirksen R.T."/>
            <person name="Kim M.-S."/>
            <person name="Niidome T."/>
            <person name="Nakai J."/>
            <person name="Friedrich T."/>
            <person name="Iwabe N."/>
            <person name="Miyata T."/>
            <person name="Furuichi T."/>
            <person name="Furutama D."/>
            <person name="Mikoshiba K."/>
            <person name="Mori Y."/>
            <person name="Beam K.G."/>
        </authorList>
    </citation>
    <scope>NUCLEOTIDE SEQUENCE [MRNA]</scope>
    <scope>FUNCTION</scope>
    <scope>TRANSPORTER ACTIVITY</scope>
    <scope>ACTIVITY REGULATION</scope>
    <scope>TISSUE SPECIFICITY</scope>
    <source>
        <tissue>Brain</tissue>
    </source>
</reference>
<gene>
    <name type="primary">CACNA1B</name>
    <name type="synonym">CACH5</name>
    <name type="synonym">CACNL1A5</name>
</gene>
<organism>
    <name type="scientific">Oryctolagus cuniculus</name>
    <name type="common">Rabbit</name>
    <dbReference type="NCBI Taxonomy" id="9986"/>
    <lineage>
        <taxon>Eukaryota</taxon>
        <taxon>Metazoa</taxon>
        <taxon>Chordata</taxon>
        <taxon>Craniata</taxon>
        <taxon>Vertebrata</taxon>
        <taxon>Euteleostomi</taxon>
        <taxon>Mammalia</taxon>
        <taxon>Eutheria</taxon>
        <taxon>Euarchontoglires</taxon>
        <taxon>Glires</taxon>
        <taxon>Lagomorpha</taxon>
        <taxon>Leporidae</taxon>
        <taxon>Oryctolagus</taxon>
    </lineage>
</organism>
<keyword id="KW-0002">3D-structure</keyword>
<keyword id="KW-0067">ATP-binding</keyword>
<keyword id="KW-0106">Calcium</keyword>
<keyword id="KW-0107">Calcium channel</keyword>
<keyword id="KW-0109">Calcium transport</keyword>
<keyword id="KW-1015">Disulfide bond</keyword>
<keyword id="KW-0325">Glycoprotein</keyword>
<keyword id="KW-0407">Ion channel</keyword>
<keyword id="KW-0406">Ion transport</keyword>
<keyword id="KW-0472">Membrane</keyword>
<keyword id="KW-0479">Metal-binding</keyword>
<keyword id="KW-0488">Methylation</keyword>
<keyword id="KW-0547">Nucleotide-binding</keyword>
<keyword id="KW-0597">Phosphoprotein</keyword>
<keyword id="KW-1185">Reference proteome</keyword>
<keyword id="KW-0677">Repeat</keyword>
<keyword id="KW-0812">Transmembrane</keyword>
<keyword id="KW-1133">Transmembrane helix</keyword>
<keyword id="KW-0813">Transport</keyword>
<keyword id="KW-0851">Voltage-gated channel</keyword>
<evidence type="ECO:0000250" key="1"/>
<evidence type="ECO:0000250" key="2">
    <source>
        <dbReference type="UniProtKB" id="O55017"/>
    </source>
</evidence>
<evidence type="ECO:0000250" key="3">
    <source>
        <dbReference type="UniProtKB" id="P15381"/>
    </source>
</evidence>
<evidence type="ECO:0000250" key="4">
    <source>
        <dbReference type="UniProtKB" id="Q00975"/>
    </source>
</evidence>
<evidence type="ECO:0000250" key="5">
    <source>
        <dbReference type="UniProtKB" id="Q02294"/>
    </source>
</evidence>
<evidence type="ECO:0000255" key="6"/>
<evidence type="ECO:0000255" key="7">
    <source>
        <dbReference type="PROSITE-ProRule" id="PRU00448"/>
    </source>
</evidence>
<evidence type="ECO:0000256" key="8">
    <source>
        <dbReference type="SAM" id="MobiDB-lite"/>
    </source>
</evidence>
<evidence type="ECO:0000269" key="9">
    <source>
    </source>
</evidence>
<evidence type="ECO:0000305" key="10"/>
<evidence type="ECO:0007829" key="11">
    <source>
        <dbReference type="PDB" id="3DVE"/>
    </source>
</evidence>
<accession>Q05152</accession>
<proteinExistence type="evidence at protein level"/>